<gene>
    <name evidence="1" type="primary">rpsD</name>
    <name type="ordered locus">SPA3282</name>
</gene>
<evidence type="ECO:0000255" key="1">
    <source>
        <dbReference type="HAMAP-Rule" id="MF_01306"/>
    </source>
</evidence>
<evidence type="ECO:0000305" key="2"/>
<proteinExistence type="inferred from homology"/>
<organism>
    <name type="scientific">Salmonella paratyphi A (strain ATCC 9150 / SARB42)</name>
    <dbReference type="NCBI Taxonomy" id="295319"/>
    <lineage>
        <taxon>Bacteria</taxon>
        <taxon>Pseudomonadati</taxon>
        <taxon>Pseudomonadota</taxon>
        <taxon>Gammaproteobacteria</taxon>
        <taxon>Enterobacterales</taxon>
        <taxon>Enterobacteriaceae</taxon>
        <taxon>Salmonella</taxon>
    </lineage>
</organism>
<name>RS4_SALPA</name>
<protein>
    <recommendedName>
        <fullName evidence="1">Small ribosomal subunit protein uS4</fullName>
    </recommendedName>
    <alternativeName>
        <fullName evidence="2">30S ribosomal protein S4</fullName>
    </alternativeName>
</protein>
<dbReference type="EMBL" id="CP000026">
    <property type="protein sequence ID" value="AAV79098.1"/>
    <property type="molecule type" value="Genomic_DNA"/>
</dbReference>
<dbReference type="RefSeq" id="WP_000135226.1">
    <property type="nucleotide sequence ID" value="NC_006511.1"/>
</dbReference>
<dbReference type="SMR" id="Q5PK09"/>
<dbReference type="GeneID" id="93035755"/>
<dbReference type="KEGG" id="spt:SPA3282"/>
<dbReference type="HOGENOM" id="CLU_092403_0_2_6"/>
<dbReference type="Proteomes" id="UP000008185">
    <property type="component" value="Chromosome"/>
</dbReference>
<dbReference type="GO" id="GO:0015935">
    <property type="term" value="C:small ribosomal subunit"/>
    <property type="evidence" value="ECO:0007669"/>
    <property type="project" value="InterPro"/>
</dbReference>
<dbReference type="GO" id="GO:0019843">
    <property type="term" value="F:rRNA binding"/>
    <property type="evidence" value="ECO:0007669"/>
    <property type="project" value="UniProtKB-UniRule"/>
</dbReference>
<dbReference type="GO" id="GO:0003735">
    <property type="term" value="F:structural constituent of ribosome"/>
    <property type="evidence" value="ECO:0007669"/>
    <property type="project" value="InterPro"/>
</dbReference>
<dbReference type="GO" id="GO:0042274">
    <property type="term" value="P:ribosomal small subunit biogenesis"/>
    <property type="evidence" value="ECO:0007669"/>
    <property type="project" value="TreeGrafter"/>
</dbReference>
<dbReference type="GO" id="GO:0006412">
    <property type="term" value="P:translation"/>
    <property type="evidence" value="ECO:0007669"/>
    <property type="project" value="UniProtKB-UniRule"/>
</dbReference>
<dbReference type="CDD" id="cd00165">
    <property type="entry name" value="S4"/>
    <property type="match status" value="1"/>
</dbReference>
<dbReference type="FunFam" id="1.10.1050.10:FF:000001">
    <property type="entry name" value="30S ribosomal protein S4"/>
    <property type="match status" value="1"/>
</dbReference>
<dbReference type="FunFam" id="3.10.290.10:FF:000001">
    <property type="entry name" value="30S ribosomal protein S4"/>
    <property type="match status" value="1"/>
</dbReference>
<dbReference type="Gene3D" id="1.10.1050.10">
    <property type="entry name" value="Ribosomal Protein S4 Delta 41, Chain A, domain 1"/>
    <property type="match status" value="1"/>
</dbReference>
<dbReference type="Gene3D" id="3.10.290.10">
    <property type="entry name" value="RNA-binding S4 domain"/>
    <property type="match status" value="1"/>
</dbReference>
<dbReference type="HAMAP" id="MF_01306_B">
    <property type="entry name" value="Ribosomal_uS4_B"/>
    <property type="match status" value="1"/>
</dbReference>
<dbReference type="InterPro" id="IPR022801">
    <property type="entry name" value="Ribosomal_uS4"/>
</dbReference>
<dbReference type="InterPro" id="IPR005709">
    <property type="entry name" value="Ribosomal_uS4_bac-type"/>
</dbReference>
<dbReference type="InterPro" id="IPR018079">
    <property type="entry name" value="Ribosomal_uS4_CS"/>
</dbReference>
<dbReference type="InterPro" id="IPR001912">
    <property type="entry name" value="Ribosomal_uS4_N"/>
</dbReference>
<dbReference type="InterPro" id="IPR002942">
    <property type="entry name" value="S4_RNA-bd"/>
</dbReference>
<dbReference type="InterPro" id="IPR036986">
    <property type="entry name" value="S4_RNA-bd_sf"/>
</dbReference>
<dbReference type="NCBIfam" id="NF003717">
    <property type="entry name" value="PRK05327.1"/>
    <property type="match status" value="1"/>
</dbReference>
<dbReference type="NCBIfam" id="TIGR01017">
    <property type="entry name" value="rpsD_bact"/>
    <property type="match status" value="1"/>
</dbReference>
<dbReference type="PANTHER" id="PTHR11831">
    <property type="entry name" value="30S 40S RIBOSOMAL PROTEIN"/>
    <property type="match status" value="1"/>
</dbReference>
<dbReference type="PANTHER" id="PTHR11831:SF4">
    <property type="entry name" value="SMALL RIBOSOMAL SUBUNIT PROTEIN US4M"/>
    <property type="match status" value="1"/>
</dbReference>
<dbReference type="Pfam" id="PF00163">
    <property type="entry name" value="Ribosomal_S4"/>
    <property type="match status" value="1"/>
</dbReference>
<dbReference type="Pfam" id="PF01479">
    <property type="entry name" value="S4"/>
    <property type="match status" value="1"/>
</dbReference>
<dbReference type="SMART" id="SM01390">
    <property type="entry name" value="Ribosomal_S4"/>
    <property type="match status" value="1"/>
</dbReference>
<dbReference type="SMART" id="SM00363">
    <property type="entry name" value="S4"/>
    <property type="match status" value="1"/>
</dbReference>
<dbReference type="SUPFAM" id="SSF55174">
    <property type="entry name" value="Alpha-L RNA-binding motif"/>
    <property type="match status" value="1"/>
</dbReference>
<dbReference type="PROSITE" id="PS00632">
    <property type="entry name" value="RIBOSOMAL_S4"/>
    <property type="match status" value="1"/>
</dbReference>
<dbReference type="PROSITE" id="PS50889">
    <property type="entry name" value="S4"/>
    <property type="match status" value="1"/>
</dbReference>
<accession>Q5PK09</accession>
<sequence length="206" mass="23485">MARYLGPKLKLSRREGTDLFLKSGVRAIDTKCKIEQAPGQHGARKPRLSDYGVQLREKQKVRRIYGVLERQFRNYYKEAARLKGNTGENLLALLEGRLDNVVYRMGFGATRAEARQLVSHKAIMVNGRVVNIASYQVSPNDVVSIREKAKKQSRVKAALELAEQREKPTWLEVDAGKMEGTYKRKPERSDLSADINEHLIVELYSK</sequence>
<reference key="1">
    <citation type="journal article" date="2004" name="Nat. Genet.">
        <title>Comparison of genome degradation in Paratyphi A and Typhi, human-restricted serovars of Salmonella enterica that cause typhoid.</title>
        <authorList>
            <person name="McClelland M."/>
            <person name="Sanderson K.E."/>
            <person name="Clifton S.W."/>
            <person name="Latreille P."/>
            <person name="Porwollik S."/>
            <person name="Sabo A."/>
            <person name="Meyer R."/>
            <person name="Bieri T."/>
            <person name="Ozersky P."/>
            <person name="McLellan M."/>
            <person name="Harkins C.R."/>
            <person name="Wang C."/>
            <person name="Nguyen C."/>
            <person name="Berghoff A."/>
            <person name="Elliott G."/>
            <person name="Kohlberg S."/>
            <person name="Strong C."/>
            <person name="Du F."/>
            <person name="Carter J."/>
            <person name="Kremizki C."/>
            <person name="Layman D."/>
            <person name="Leonard S."/>
            <person name="Sun H."/>
            <person name="Fulton L."/>
            <person name="Nash W."/>
            <person name="Miner T."/>
            <person name="Minx P."/>
            <person name="Delehaunty K."/>
            <person name="Fronick C."/>
            <person name="Magrini V."/>
            <person name="Nhan M."/>
            <person name="Warren W."/>
            <person name="Florea L."/>
            <person name="Spieth J."/>
            <person name="Wilson R.K."/>
        </authorList>
    </citation>
    <scope>NUCLEOTIDE SEQUENCE [LARGE SCALE GENOMIC DNA]</scope>
    <source>
        <strain>ATCC 9150 / SARB42</strain>
    </source>
</reference>
<comment type="function">
    <text evidence="1">One of the primary rRNA binding proteins, it binds directly to 16S rRNA where it nucleates assembly of the body of the 30S subunit.</text>
</comment>
<comment type="function">
    <text evidence="1">With S5 and S12 plays an important role in translational accuracy.</text>
</comment>
<comment type="subunit">
    <text evidence="1">Part of the 30S ribosomal subunit. Contacts protein S5. The interaction surface between S4 and S5 is involved in control of translational fidelity.</text>
</comment>
<comment type="similarity">
    <text evidence="1">Belongs to the universal ribosomal protein uS4 family.</text>
</comment>
<feature type="chain" id="PRO_0000132449" description="Small ribosomal subunit protein uS4">
    <location>
        <begin position="1"/>
        <end position="206"/>
    </location>
</feature>
<feature type="domain" description="S4 RNA-binding" evidence="1">
    <location>
        <begin position="96"/>
        <end position="156"/>
    </location>
</feature>
<keyword id="KW-0687">Ribonucleoprotein</keyword>
<keyword id="KW-0689">Ribosomal protein</keyword>
<keyword id="KW-0694">RNA-binding</keyword>
<keyword id="KW-0699">rRNA-binding</keyword>